<keyword id="KW-0249">Electron transport</keyword>
<keyword id="KW-0349">Heme</keyword>
<keyword id="KW-0408">Iron</keyword>
<keyword id="KW-0472">Membrane</keyword>
<keyword id="KW-0479">Metal-binding</keyword>
<keyword id="KW-0496">Mitochondrion</keyword>
<keyword id="KW-0999">Mitochondrion inner membrane</keyword>
<keyword id="KW-0679">Respiratory chain</keyword>
<keyword id="KW-0812">Transmembrane</keyword>
<keyword id="KW-1133">Transmembrane helix</keyword>
<keyword id="KW-0813">Transport</keyword>
<keyword id="KW-0830">Ubiquinone</keyword>
<evidence type="ECO:0000250" key="1"/>
<evidence type="ECO:0000250" key="2">
    <source>
        <dbReference type="UniProtKB" id="P00157"/>
    </source>
</evidence>
<evidence type="ECO:0000255" key="3">
    <source>
        <dbReference type="PROSITE-ProRule" id="PRU00967"/>
    </source>
</evidence>
<evidence type="ECO:0000255" key="4">
    <source>
        <dbReference type="PROSITE-ProRule" id="PRU00968"/>
    </source>
</evidence>
<sequence>MTNIRKSHPLMKIINNTFIDLPTPSNISSWWNFGSLLGICLILQILTGLFLAMHYTPDTMTAFSSVTHICRDVNYGWIIRYLHANGASMFFICLFIHVGRGLYYGSYMFLETWNIGVILLFTVMATAFMGYVLPWGQMSFWGATVITNLLSAIPYIGTDLVEWIWGGFSVDKATLTRFFAFHFILPFIITALATVHLLFLHETGSNNPTGISSDMDKIPFHPYYTIKDILGALLMIMALLILVLFSPDLLGDPDNYTPANPLNTPPHIKPEWYFLFAYAILRSIPNKLGGVLALVASILILILMPMLHTSKQRSMMFRPLSQCLFWVLVADLVTLTWIGGQPVEHPFIIIGQLASILYFSIILVLMPITSIIENSLLKL</sequence>
<geneLocation type="mitochondrion"/>
<reference key="1">
    <citation type="journal article" date="1996" name="J. Mammal. Evol.">
        <title>Evolutionary genetics of the suiformes as reconstructed using MT DNA sequencing.</title>
        <authorList>
            <person name="Randi E."/>
            <person name="Lucchini V."/>
            <person name="Diong C."/>
        </authorList>
    </citation>
    <scope>NUCLEOTIDE SEQUENCE [GENOMIC DNA]</scope>
    <source>
        <tissue>Liver</tissue>
    </source>
</reference>
<reference key="2">
    <citation type="submission" date="2001-05" db="EMBL/GenBank/DDBJ databases">
        <title>Evidence of two genetically deeply divergent species of warthog, Phacochoerus africanus and P. aethiopicus (Artiodactyla: Suiformes) in East Africa.</title>
        <authorList>
            <person name="Randi E."/>
            <person name="d'Huart J.P."/>
            <person name="Lucchini V."/>
            <person name="Aman R."/>
        </authorList>
    </citation>
    <scope>NUCLEOTIDE SEQUENCE [GENOMIC DNA]</scope>
    <source>
        <strain>Isolate Bba1</strain>
        <strain>Isolate Bba2</strain>
    </source>
</reference>
<feature type="chain" id="PRO_0000060656" description="Cytochrome b">
    <location>
        <begin position="1"/>
        <end position="379"/>
    </location>
</feature>
<feature type="transmembrane region" description="Helical" evidence="2">
    <location>
        <begin position="33"/>
        <end position="53"/>
    </location>
</feature>
<feature type="transmembrane region" description="Helical" evidence="2">
    <location>
        <begin position="77"/>
        <end position="98"/>
    </location>
</feature>
<feature type="transmembrane region" description="Helical" evidence="2">
    <location>
        <begin position="113"/>
        <end position="133"/>
    </location>
</feature>
<feature type="transmembrane region" description="Helical" evidence="2">
    <location>
        <begin position="178"/>
        <end position="198"/>
    </location>
</feature>
<feature type="transmembrane region" description="Helical" evidence="2">
    <location>
        <begin position="226"/>
        <end position="246"/>
    </location>
</feature>
<feature type="transmembrane region" description="Helical" evidence="2">
    <location>
        <begin position="288"/>
        <end position="308"/>
    </location>
</feature>
<feature type="transmembrane region" description="Helical" evidence="2">
    <location>
        <begin position="320"/>
        <end position="340"/>
    </location>
</feature>
<feature type="transmembrane region" description="Helical" evidence="2">
    <location>
        <begin position="347"/>
        <end position="367"/>
    </location>
</feature>
<feature type="binding site" description="axial binding residue" evidence="2">
    <location>
        <position position="83"/>
    </location>
    <ligand>
        <name>heme b</name>
        <dbReference type="ChEBI" id="CHEBI:60344"/>
        <label>b562</label>
    </ligand>
    <ligandPart>
        <name>Fe</name>
        <dbReference type="ChEBI" id="CHEBI:18248"/>
    </ligandPart>
</feature>
<feature type="binding site" description="axial binding residue" evidence="2">
    <location>
        <position position="97"/>
    </location>
    <ligand>
        <name>heme b</name>
        <dbReference type="ChEBI" id="CHEBI:60344"/>
        <label>b566</label>
    </ligand>
    <ligandPart>
        <name>Fe</name>
        <dbReference type="ChEBI" id="CHEBI:18248"/>
    </ligandPart>
</feature>
<feature type="binding site" description="axial binding residue" evidence="2">
    <location>
        <position position="182"/>
    </location>
    <ligand>
        <name>heme b</name>
        <dbReference type="ChEBI" id="CHEBI:60344"/>
        <label>b562</label>
    </ligand>
    <ligandPart>
        <name>Fe</name>
        <dbReference type="ChEBI" id="CHEBI:18248"/>
    </ligandPart>
</feature>
<feature type="binding site" description="axial binding residue" evidence="2">
    <location>
        <position position="196"/>
    </location>
    <ligand>
        <name>heme b</name>
        <dbReference type="ChEBI" id="CHEBI:60344"/>
        <label>b566</label>
    </ligand>
    <ligandPart>
        <name>Fe</name>
        <dbReference type="ChEBI" id="CHEBI:18248"/>
    </ligandPart>
</feature>
<feature type="binding site" evidence="2">
    <location>
        <position position="201"/>
    </location>
    <ligand>
        <name>a ubiquinone</name>
        <dbReference type="ChEBI" id="CHEBI:16389"/>
    </ligand>
</feature>
<feature type="sequence variant" description="In strain: Isolate Bba1.">
    <original>L</original>
    <variation>V</variation>
    <location>
        <position position="328"/>
    </location>
</feature>
<name>CYB_BABBA</name>
<dbReference type="EMBL" id="Z50106">
    <property type="protein sequence ID" value="CAA90429.1"/>
    <property type="molecule type" value="Genomic_DNA"/>
</dbReference>
<dbReference type="EMBL" id="AJ314559">
    <property type="protein sequence ID" value="CAC85260.1"/>
    <property type="molecule type" value="Genomic_DNA"/>
</dbReference>
<dbReference type="EMBL" id="AJ314560">
    <property type="protein sequence ID" value="CAC85261.1"/>
    <property type="molecule type" value="Genomic_DNA"/>
</dbReference>
<dbReference type="PIR" id="S58085">
    <property type="entry name" value="S58085"/>
</dbReference>
<dbReference type="SMR" id="Q36324"/>
<dbReference type="GO" id="GO:0005743">
    <property type="term" value="C:mitochondrial inner membrane"/>
    <property type="evidence" value="ECO:0007669"/>
    <property type="project" value="UniProtKB-SubCell"/>
</dbReference>
<dbReference type="GO" id="GO:0045275">
    <property type="term" value="C:respiratory chain complex III"/>
    <property type="evidence" value="ECO:0007669"/>
    <property type="project" value="InterPro"/>
</dbReference>
<dbReference type="GO" id="GO:0046872">
    <property type="term" value="F:metal ion binding"/>
    <property type="evidence" value="ECO:0007669"/>
    <property type="project" value="UniProtKB-KW"/>
</dbReference>
<dbReference type="GO" id="GO:0008121">
    <property type="term" value="F:ubiquinol-cytochrome-c reductase activity"/>
    <property type="evidence" value="ECO:0007669"/>
    <property type="project" value="InterPro"/>
</dbReference>
<dbReference type="GO" id="GO:0006122">
    <property type="term" value="P:mitochondrial electron transport, ubiquinol to cytochrome c"/>
    <property type="evidence" value="ECO:0007669"/>
    <property type="project" value="TreeGrafter"/>
</dbReference>
<dbReference type="CDD" id="cd00290">
    <property type="entry name" value="cytochrome_b_C"/>
    <property type="match status" value="1"/>
</dbReference>
<dbReference type="CDD" id="cd00284">
    <property type="entry name" value="Cytochrome_b_N"/>
    <property type="match status" value="1"/>
</dbReference>
<dbReference type="FunFam" id="1.20.810.10:FF:000002">
    <property type="entry name" value="Cytochrome b"/>
    <property type="match status" value="1"/>
</dbReference>
<dbReference type="Gene3D" id="1.20.810.10">
    <property type="entry name" value="Cytochrome Bc1 Complex, Chain C"/>
    <property type="match status" value="1"/>
</dbReference>
<dbReference type="InterPro" id="IPR005798">
    <property type="entry name" value="Cyt_b/b6_C"/>
</dbReference>
<dbReference type="InterPro" id="IPR036150">
    <property type="entry name" value="Cyt_b/b6_C_sf"/>
</dbReference>
<dbReference type="InterPro" id="IPR005797">
    <property type="entry name" value="Cyt_b/b6_N"/>
</dbReference>
<dbReference type="InterPro" id="IPR027387">
    <property type="entry name" value="Cytb/b6-like_sf"/>
</dbReference>
<dbReference type="InterPro" id="IPR030689">
    <property type="entry name" value="Cytochrome_b"/>
</dbReference>
<dbReference type="InterPro" id="IPR048260">
    <property type="entry name" value="Cytochrome_b_C_euk/bac"/>
</dbReference>
<dbReference type="InterPro" id="IPR048259">
    <property type="entry name" value="Cytochrome_b_N_euk/bac"/>
</dbReference>
<dbReference type="InterPro" id="IPR016174">
    <property type="entry name" value="Di-haem_cyt_TM"/>
</dbReference>
<dbReference type="PANTHER" id="PTHR19271">
    <property type="entry name" value="CYTOCHROME B"/>
    <property type="match status" value="1"/>
</dbReference>
<dbReference type="PANTHER" id="PTHR19271:SF16">
    <property type="entry name" value="CYTOCHROME B"/>
    <property type="match status" value="1"/>
</dbReference>
<dbReference type="Pfam" id="PF00032">
    <property type="entry name" value="Cytochrom_B_C"/>
    <property type="match status" value="1"/>
</dbReference>
<dbReference type="Pfam" id="PF00033">
    <property type="entry name" value="Cytochrome_B"/>
    <property type="match status" value="1"/>
</dbReference>
<dbReference type="PIRSF" id="PIRSF038885">
    <property type="entry name" value="COB"/>
    <property type="match status" value="1"/>
</dbReference>
<dbReference type="SUPFAM" id="SSF81648">
    <property type="entry name" value="a domain/subunit of cytochrome bc1 complex (Ubiquinol-cytochrome c reductase)"/>
    <property type="match status" value="1"/>
</dbReference>
<dbReference type="SUPFAM" id="SSF81342">
    <property type="entry name" value="Transmembrane di-heme cytochromes"/>
    <property type="match status" value="1"/>
</dbReference>
<dbReference type="PROSITE" id="PS51003">
    <property type="entry name" value="CYTB_CTER"/>
    <property type="match status" value="1"/>
</dbReference>
<dbReference type="PROSITE" id="PS51002">
    <property type="entry name" value="CYTB_NTER"/>
    <property type="match status" value="1"/>
</dbReference>
<comment type="function">
    <text evidence="2">Component of the ubiquinol-cytochrome c reductase complex (complex III or cytochrome b-c1 complex) that is part of the mitochondrial respiratory chain. The b-c1 complex mediates electron transfer from ubiquinol to cytochrome c. Contributes to the generation of a proton gradient across the mitochondrial membrane that is then used for ATP synthesis.</text>
</comment>
<comment type="cofactor">
    <cofactor evidence="2">
        <name>heme b</name>
        <dbReference type="ChEBI" id="CHEBI:60344"/>
    </cofactor>
    <text evidence="2">Binds 2 heme b groups non-covalently.</text>
</comment>
<comment type="subunit">
    <text evidence="2">The cytochrome bc1 complex contains 11 subunits: 3 respiratory subunits (MT-CYB, CYC1 and UQCRFS1), 2 core proteins (UQCRC1 and UQCRC2) and 6 low-molecular weight proteins (UQCRH/QCR6, UQCRB/QCR7, UQCRQ/QCR8, UQCR10/QCR9, UQCR11/QCR10 and a cleavage product of UQCRFS1). This cytochrome bc1 complex then forms a dimer.</text>
</comment>
<comment type="subcellular location">
    <subcellularLocation>
        <location evidence="2">Mitochondrion inner membrane</location>
        <topology evidence="2">Multi-pass membrane protein</topology>
    </subcellularLocation>
</comment>
<comment type="miscellaneous">
    <text evidence="1">Heme 1 (or BL or b562) is low-potential and absorbs at about 562 nm, and heme 2 (or BH or b566) is high-potential and absorbs at about 566 nm.</text>
</comment>
<comment type="similarity">
    <text evidence="3 4">Belongs to the cytochrome b family.</text>
</comment>
<comment type="caution">
    <text evidence="2">The full-length protein contains only eight transmembrane helices, not nine as predicted by bioinformatics tools.</text>
</comment>
<protein>
    <recommendedName>
        <fullName>Cytochrome b</fullName>
    </recommendedName>
    <alternativeName>
        <fullName>Complex III subunit 3</fullName>
    </alternativeName>
    <alternativeName>
        <fullName>Complex III subunit III</fullName>
    </alternativeName>
    <alternativeName>
        <fullName>Cytochrome b-c1 complex subunit 3</fullName>
    </alternativeName>
    <alternativeName>
        <fullName>Ubiquinol-cytochrome-c reductase complex cytochrome b subunit</fullName>
    </alternativeName>
</protein>
<accession>Q36324</accession>
<accession>Q8M754</accession>
<gene>
    <name type="primary">MT-CYB</name>
    <name type="synonym">COB</name>
    <name type="synonym">CYTB</name>
    <name type="synonym">MTCYB</name>
</gene>
<organism>
    <name type="scientific">Babyrousa babyrussa</name>
    <name type="common">Babirusa</name>
    <dbReference type="NCBI Taxonomy" id="41806"/>
    <lineage>
        <taxon>Eukaryota</taxon>
        <taxon>Metazoa</taxon>
        <taxon>Chordata</taxon>
        <taxon>Craniata</taxon>
        <taxon>Vertebrata</taxon>
        <taxon>Euteleostomi</taxon>
        <taxon>Mammalia</taxon>
        <taxon>Eutheria</taxon>
        <taxon>Laurasiatheria</taxon>
        <taxon>Artiodactyla</taxon>
        <taxon>Suina</taxon>
        <taxon>Suidae</taxon>
        <taxon>Babyrousa</taxon>
    </lineage>
</organism>
<proteinExistence type="inferred from homology"/>